<proteinExistence type="inferred from homology"/>
<accession>Q6IM95</accession>
<dbReference type="EMBL" id="BK001749">
    <property type="protein sequence ID" value="DAA02277.1"/>
    <property type="molecule type" value="mRNA"/>
</dbReference>
<dbReference type="EMBL" id="AB028607">
    <property type="status" value="NOT_ANNOTATED_CDS"/>
    <property type="molecule type" value="Genomic_DNA"/>
</dbReference>
<dbReference type="EMBL" id="CP002686">
    <property type="protein sequence ID" value="AEE77058.1"/>
    <property type="molecule type" value="Genomic_DNA"/>
</dbReference>
<dbReference type="RefSeq" id="NP_850631.2">
    <property type="nucleotide sequence ID" value="NM_180300.1"/>
</dbReference>
<dbReference type="STRING" id="3702.Q6IM95"/>
<dbReference type="PaxDb" id="3702-AT3G25717.1"/>
<dbReference type="EnsemblPlants" id="AT3G25717.1">
    <property type="protein sequence ID" value="AT3G25717.1"/>
    <property type="gene ID" value="AT3G25717"/>
</dbReference>
<dbReference type="GeneID" id="822160"/>
<dbReference type="Gramene" id="AT3G25717.1">
    <property type="protein sequence ID" value="AT3G25717.1"/>
    <property type="gene ID" value="AT3G25717"/>
</dbReference>
<dbReference type="KEGG" id="ath:AT3G25717"/>
<dbReference type="Araport" id="AT3G25717"/>
<dbReference type="TAIR" id="AT3G25717">
    <property type="gene designation" value="RTFL16"/>
</dbReference>
<dbReference type="HOGENOM" id="CLU_150897_5_1_1"/>
<dbReference type="InParanoid" id="Q6IM95"/>
<dbReference type="PhylomeDB" id="Q6IM95"/>
<dbReference type="PRO" id="PR:Q6IM95"/>
<dbReference type="Proteomes" id="UP000006548">
    <property type="component" value="Chromosome 3"/>
</dbReference>
<dbReference type="GO" id="GO:0005886">
    <property type="term" value="C:plasma membrane"/>
    <property type="evidence" value="ECO:0000250"/>
    <property type="project" value="UniProtKB"/>
</dbReference>
<dbReference type="GO" id="GO:0008285">
    <property type="term" value="P:negative regulation of cell population proliferation"/>
    <property type="evidence" value="ECO:0000250"/>
    <property type="project" value="UniProtKB"/>
</dbReference>
<dbReference type="GO" id="GO:0048367">
    <property type="term" value="P:shoot system development"/>
    <property type="evidence" value="ECO:0000250"/>
    <property type="project" value="TAIR"/>
</dbReference>
<dbReference type="InterPro" id="IPR012552">
    <property type="entry name" value="DVL"/>
</dbReference>
<dbReference type="InterPro" id="IPR052153">
    <property type="entry name" value="DVL/RTFL_small_peptides"/>
</dbReference>
<dbReference type="PANTHER" id="PTHR47855">
    <property type="entry name" value="OS01G0525701 PROTEIN"/>
    <property type="match status" value="1"/>
</dbReference>
<dbReference type="PANTHER" id="PTHR47855:SF6">
    <property type="entry name" value="ROTUNDIFOLIA LIKE 8"/>
    <property type="match status" value="1"/>
</dbReference>
<dbReference type="Pfam" id="PF08137">
    <property type="entry name" value="DVL"/>
    <property type="match status" value="1"/>
</dbReference>
<comment type="function">
    <text evidence="1">Small polypeptide acting as a regulatory molecule which coordinates cellular responses required for differentiation, growth and development, probably by restricting polar cell proliferation in lateral organs and coordinating socket cell recruitment and differentiation at trichome sites.</text>
</comment>
<comment type="subcellular location">
    <subcellularLocation>
        <location evidence="2">Cell membrane</location>
        <topology evidence="3">Single-pass membrane protein</topology>
    </subcellularLocation>
</comment>
<comment type="similarity">
    <text evidence="6">Belongs to the DVL/RTFL small polypeptides family.</text>
</comment>
<keyword id="KW-1003">Cell membrane</keyword>
<keyword id="KW-0217">Developmental protein</keyword>
<keyword id="KW-0472">Membrane</keyword>
<keyword id="KW-1185">Reference proteome</keyword>
<keyword id="KW-0812">Transmembrane</keyword>
<keyword id="KW-1133">Transmembrane helix</keyword>
<reference key="1">
    <citation type="journal article" date="2004" name="Plant J.">
        <title>DVL, a novel class of small polypeptides: overexpression alters Arabidopsis development.</title>
        <authorList>
            <person name="Wen J."/>
            <person name="Lease K.A."/>
            <person name="Walker J.C."/>
        </authorList>
    </citation>
    <scope>NUCLEOTIDE SEQUENCE [MRNA]</scope>
    <scope>GENE FAMILY</scope>
    <scope>NOMENCLATURE</scope>
    <source>
        <strain>cv. Columbia</strain>
    </source>
</reference>
<reference key="2">
    <citation type="journal article" date="2000" name="DNA Res.">
        <title>Structural analysis of Arabidopsis thaliana chromosome 3. I. Sequence features of the regions of 4,504,864 bp covered by sixty P1 and TAC clones.</title>
        <authorList>
            <person name="Sato S."/>
            <person name="Nakamura Y."/>
            <person name="Kaneko T."/>
            <person name="Katoh T."/>
            <person name="Asamizu E."/>
            <person name="Tabata S."/>
        </authorList>
    </citation>
    <scope>NUCLEOTIDE SEQUENCE [LARGE SCALE GENOMIC DNA]</scope>
    <source>
        <strain>cv. Columbia</strain>
    </source>
</reference>
<reference key="3">
    <citation type="journal article" date="2017" name="Plant J.">
        <title>Araport11: a complete reannotation of the Arabidopsis thaliana reference genome.</title>
        <authorList>
            <person name="Cheng C.Y."/>
            <person name="Krishnakumar V."/>
            <person name="Chan A.P."/>
            <person name="Thibaud-Nissen F."/>
            <person name="Schobel S."/>
            <person name="Town C.D."/>
        </authorList>
    </citation>
    <scope>GENOME REANNOTATION</scope>
    <source>
        <strain>cv. Columbia</strain>
    </source>
</reference>
<reference key="4">
    <citation type="journal article" date="2004" name="Plant J.">
        <title>Overexpression of a novel small peptide ROTUNDIFOLIA4 decreases cell proliferation and alters leaf shape in Arabidopsis thaliana.</title>
        <authorList>
            <person name="Narita N.N."/>
            <person name="Moore S."/>
            <person name="Horiguchi G."/>
            <person name="Kubo M."/>
            <person name="Demura T."/>
            <person name="Fukuda H."/>
            <person name="Goodrich J."/>
            <person name="Tsukaya H."/>
        </authorList>
    </citation>
    <scope>GENE FAMILY</scope>
    <source>
        <strain>cv. Columbia</strain>
        <strain>cv. Landsberg erecta</strain>
    </source>
</reference>
<reference key="5">
    <citation type="journal article" date="2015" name="J. Plant Res.">
        <title>Comparative analysis of the RTFL peptide family on the control of plant organogenesis.</title>
        <authorList>
            <person name="Guo P."/>
            <person name="Yoshimura A."/>
            <person name="Ishikawa N."/>
            <person name="Yamaguchi T."/>
            <person name="Guo Y."/>
            <person name="Tsukaya H."/>
        </authorList>
    </citation>
    <scope>REVIEW</scope>
    <scope>GENE FAMILY</scope>
    <scope>NOMENCLATURE</scope>
    <source>
        <strain>cv. Columbia</strain>
    </source>
</reference>
<sequence length="40" mass="4620">MGVLKRRVSSSRGLGGVLREQRAKLYIIKRCVVMLLCWQD</sequence>
<gene>
    <name evidence="4" type="primary">DVL6</name>
    <name evidence="5" type="synonym">RTFL16</name>
    <name evidence="7" type="ordered locus">At3g25717</name>
    <name evidence="8" type="ORF">K13N2</name>
</gene>
<name>DVL6_ARATH</name>
<protein>
    <recommendedName>
        <fullName evidence="4">Small polypeptide DEVIL 6</fullName>
    </recommendedName>
    <alternativeName>
        <fullName evidence="5">Small polypeptide ROTUNDIFOLIA LIKE 16</fullName>
        <shortName evidence="5">Small polypeptide ROT-FOUR-LIKE 16</shortName>
    </alternativeName>
</protein>
<evidence type="ECO:0000250" key="1">
    <source>
        <dbReference type="UniProtKB" id="Q6X5V0"/>
    </source>
</evidence>
<evidence type="ECO:0000250" key="2">
    <source>
        <dbReference type="UniProtKB" id="Q7XXN8"/>
    </source>
</evidence>
<evidence type="ECO:0000255" key="3"/>
<evidence type="ECO:0000303" key="4">
    <source>
    </source>
</evidence>
<evidence type="ECO:0000303" key="5">
    <source>
    </source>
</evidence>
<evidence type="ECO:0000305" key="6"/>
<evidence type="ECO:0000312" key="7">
    <source>
        <dbReference type="Araport" id="AT3G25717"/>
    </source>
</evidence>
<evidence type="ECO:0000312" key="8">
    <source>
        <dbReference type="EMBL" id="AB028607"/>
    </source>
</evidence>
<organism>
    <name type="scientific">Arabidopsis thaliana</name>
    <name type="common">Mouse-ear cress</name>
    <dbReference type="NCBI Taxonomy" id="3702"/>
    <lineage>
        <taxon>Eukaryota</taxon>
        <taxon>Viridiplantae</taxon>
        <taxon>Streptophyta</taxon>
        <taxon>Embryophyta</taxon>
        <taxon>Tracheophyta</taxon>
        <taxon>Spermatophyta</taxon>
        <taxon>Magnoliopsida</taxon>
        <taxon>eudicotyledons</taxon>
        <taxon>Gunneridae</taxon>
        <taxon>Pentapetalae</taxon>
        <taxon>rosids</taxon>
        <taxon>malvids</taxon>
        <taxon>Brassicales</taxon>
        <taxon>Brassicaceae</taxon>
        <taxon>Camelineae</taxon>
        <taxon>Arabidopsis</taxon>
    </lineage>
</organism>
<feature type="chain" id="PRO_0000452774" description="Small polypeptide DEVIL 6">
    <location>
        <begin position="1"/>
        <end position="40"/>
    </location>
</feature>
<feature type="transmembrane region" description="Helical" evidence="3">
    <location>
        <begin position="12"/>
        <end position="28"/>
    </location>
</feature>
<feature type="region of interest" description="Required for DVL/RTFL small polypeptide activity" evidence="2">
    <location>
        <begin position="9"/>
        <end position="40"/>
    </location>
</feature>